<name>ATG7_CANGA</name>
<feature type="chain" id="PRO_0000212812" description="Ubiquitin-like modifier-activating enzyme ATG7">
    <location>
        <begin position="1"/>
        <end position="623"/>
    </location>
</feature>
<feature type="short sequence motif" description="GXGXXG motif">
    <location>
        <begin position="327"/>
        <end position="332"/>
    </location>
</feature>
<feature type="active site" description="Glycyl thioester intermediate" evidence="1">
    <location>
        <position position="499"/>
    </location>
</feature>
<keyword id="KW-0072">Autophagy</keyword>
<keyword id="KW-0963">Cytoplasm</keyword>
<keyword id="KW-0653">Protein transport</keyword>
<keyword id="KW-1185">Reference proteome</keyword>
<keyword id="KW-0813">Transport</keyword>
<keyword id="KW-0833">Ubl conjugation pathway</keyword>
<sequence>MTQKLLYVSPVESFVDTSFFQELSRLKLDIHGLSTSQITIHSYLDLKNIPSVSSACHLFLDQQSFNSEDICASSERVRLEGKLYNCNSLEEFKSLDKQQYLAEQGQKIYTKALEDINSAIGFSIISFADLKKYVFYYWVCTPLFQHENQQISILDGPEDIDASFNDKAKVWFTNHYSNWVAIVLENGDINEYTKGLNTSSIRGLLIRDTSNKQDMPSAFLRNFITIFSLDYPEAKELDVFLMRSSTIKSIKLRIRLSETEHTKLKFSGWERNSLSKLMPRAVDLSALIDPLKVAEQSVDLNLKLMKWRIAPELDLDCIRNNKVLILGSGTLGCYTARSLMAWGCRNITLVDNGRVSYSNPVRQPLFEFSDVGKEKAVAAAASLKRVFPLINAKGVQLDIPMIGHPVKDENNERKHFDALVDLIKSHDTMFLLLDSRETRWLPTLLGKFYDKIVMNAALGFDSYLIMKHGNIDDNFGCYFCNDVVVPTDSLTGRTLDQMCTVTRPGVAMLAASQAVELFVSNLQSRGQENVLGECPHQIRGFVNNFTTLKLQSPAYDNCSACSRHILNEYNKRGWDFVKQALNDNNYIEELSGLRRIKEEVENMELEGGEIKIIDSEDDGFEII</sequence>
<accession>Q6FQY7</accession>
<evidence type="ECO:0000250" key="1"/>
<evidence type="ECO:0000305" key="2"/>
<gene>
    <name type="primary">ATG7</name>
    <name type="ordered locus">CAGL0I02420g</name>
</gene>
<dbReference type="EMBL" id="CR380955">
    <property type="protein sequence ID" value="CAG60294.1"/>
    <property type="molecule type" value="Genomic_DNA"/>
</dbReference>
<dbReference type="RefSeq" id="XP_447357.1">
    <property type="nucleotide sequence ID" value="XM_447357.1"/>
</dbReference>
<dbReference type="SMR" id="Q6FQY7"/>
<dbReference type="FunCoup" id="Q6FQY7">
    <property type="interactions" value="795"/>
</dbReference>
<dbReference type="STRING" id="284593.Q6FQY7"/>
<dbReference type="EnsemblFungi" id="CAGL0I02420g-T">
    <property type="protein sequence ID" value="CAGL0I02420g-T-p1"/>
    <property type="gene ID" value="CAGL0I02420g"/>
</dbReference>
<dbReference type="KEGG" id="cgr:2889381"/>
<dbReference type="CGD" id="CAL0132204">
    <property type="gene designation" value="CAGL0I02420g"/>
</dbReference>
<dbReference type="VEuPathDB" id="FungiDB:CAGL0I02420g"/>
<dbReference type="eggNOG" id="KOG2337">
    <property type="taxonomic scope" value="Eukaryota"/>
</dbReference>
<dbReference type="HOGENOM" id="CLU_012998_2_1_1"/>
<dbReference type="InParanoid" id="Q6FQY7"/>
<dbReference type="OMA" id="RQIWDAI"/>
<dbReference type="Proteomes" id="UP000002428">
    <property type="component" value="Chromosome I"/>
</dbReference>
<dbReference type="GO" id="GO:0005829">
    <property type="term" value="C:cytosol"/>
    <property type="evidence" value="ECO:0007669"/>
    <property type="project" value="EnsemblFungi"/>
</dbReference>
<dbReference type="GO" id="GO:0097632">
    <property type="term" value="C:extrinsic component of phagophore assembly site membrane"/>
    <property type="evidence" value="ECO:0007669"/>
    <property type="project" value="EnsemblFungi"/>
</dbReference>
<dbReference type="GO" id="GO:0019778">
    <property type="term" value="F:Atg12 activating enzyme activity"/>
    <property type="evidence" value="ECO:0007669"/>
    <property type="project" value="EnsemblFungi"/>
</dbReference>
<dbReference type="GO" id="GO:0019779">
    <property type="term" value="F:Atg8 activating enzyme activity"/>
    <property type="evidence" value="ECO:0007669"/>
    <property type="project" value="EnsemblFungi"/>
</dbReference>
<dbReference type="GO" id="GO:0042802">
    <property type="term" value="F:identical protein binding"/>
    <property type="evidence" value="ECO:0007669"/>
    <property type="project" value="EnsemblFungi"/>
</dbReference>
<dbReference type="GO" id="GO:0000045">
    <property type="term" value="P:autophagosome assembly"/>
    <property type="evidence" value="ECO:0007669"/>
    <property type="project" value="TreeGrafter"/>
</dbReference>
<dbReference type="GO" id="GO:0000422">
    <property type="term" value="P:autophagy of mitochondrion"/>
    <property type="evidence" value="ECO:0007669"/>
    <property type="project" value="EnsemblFungi"/>
</dbReference>
<dbReference type="GO" id="GO:0006995">
    <property type="term" value="P:cellular response to nitrogen starvation"/>
    <property type="evidence" value="ECO:0007669"/>
    <property type="project" value="TreeGrafter"/>
</dbReference>
<dbReference type="GO" id="GO:0032258">
    <property type="term" value="P:cytoplasm to vacuole targeting by the Cvt pathway"/>
    <property type="evidence" value="ECO:0007669"/>
    <property type="project" value="EnsemblFungi"/>
</dbReference>
<dbReference type="GO" id="GO:0034727">
    <property type="term" value="P:piecemeal microautophagy of the nucleus"/>
    <property type="evidence" value="ECO:0007669"/>
    <property type="project" value="EnsemblFungi"/>
</dbReference>
<dbReference type="GO" id="GO:0032446">
    <property type="term" value="P:protein modification by small protein conjugation"/>
    <property type="evidence" value="ECO:0007669"/>
    <property type="project" value="EnsemblFungi"/>
</dbReference>
<dbReference type="FunFam" id="3.40.50.720:FF:000243">
    <property type="entry name" value="Ubiquitin-like modifier-activating enzyme ATG7"/>
    <property type="match status" value="1"/>
</dbReference>
<dbReference type="Gene3D" id="3.40.50.720">
    <property type="entry name" value="NAD(P)-binding Rossmann-like Domain"/>
    <property type="match status" value="1"/>
</dbReference>
<dbReference type="Gene3D" id="3.40.140.100">
    <property type="entry name" value="Ubiquitin-like modifier-activating enzyme ATG7 C-terminal domain"/>
    <property type="match status" value="1"/>
</dbReference>
<dbReference type="Gene3D" id="3.40.140.70">
    <property type="entry name" value="Ubiquitin-like modifier-activating enzyme ATG7 N-terminal domain"/>
    <property type="match status" value="1"/>
</dbReference>
<dbReference type="InterPro" id="IPR006285">
    <property type="entry name" value="Atg7"/>
</dbReference>
<dbReference type="InterPro" id="IPR032197">
    <property type="entry name" value="Atg7_N"/>
</dbReference>
<dbReference type="InterPro" id="IPR042522">
    <property type="entry name" value="Atg7_N_1"/>
</dbReference>
<dbReference type="InterPro" id="IPR042523">
    <property type="entry name" value="Atg7_N_2"/>
</dbReference>
<dbReference type="InterPro" id="IPR045886">
    <property type="entry name" value="ThiF/MoeB/HesA"/>
</dbReference>
<dbReference type="InterPro" id="IPR000594">
    <property type="entry name" value="ThiF_NAD_FAD-bd"/>
</dbReference>
<dbReference type="InterPro" id="IPR035985">
    <property type="entry name" value="Ubiquitin-activating_enz"/>
</dbReference>
<dbReference type="NCBIfam" id="TIGR01381">
    <property type="entry name" value="E1_like_apg7"/>
    <property type="match status" value="1"/>
</dbReference>
<dbReference type="PANTHER" id="PTHR10953">
    <property type="entry name" value="UBIQUITIN-ACTIVATING ENZYME E1"/>
    <property type="match status" value="1"/>
</dbReference>
<dbReference type="PANTHER" id="PTHR10953:SF3">
    <property type="entry name" value="UBIQUITIN-LIKE MODIFIER-ACTIVATING ENZYME ATG7"/>
    <property type="match status" value="1"/>
</dbReference>
<dbReference type="Pfam" id="PF16420">
    <property type="entry name" value="ATG7_N"/>
    <property type="match status" value="1"/>
</dbReference>
<dbReference type="Pfam" id="PF00899">
    <property type="entry name" value="ThiF"/>
    <property type="match status" value="1"/>
</dbReference>
<dbReference type="SUPFAM" id="SSF69572">
    <property type="entry name" value="Activating enzymes of the ubiquitin-like proteins"/>
    <property type="match status" value="1"/>
</dbReference>
<reference key="1">
    <citation type="journal article" date="2004" name="Nature">
        <title>Genome evolution in yeasts.</title>
        <authorList>
            <person name="Dujon B."/>
            <person name="Sherman D."/>
            <person name="Fischer G."/>
            <person name="Durrens P."/>
            <person name="Casaregola S."/>
            <person name="Lafontaine I."/>
            <person name="de Montigny J."/>
            <person name="Marck C."/>
            <person name="Neuveglise C."/>
            <person name="Talla E."/>
            <person name="Goffard N."/>
            <person name="Frangeul L."/>
            <person name="Aigle M."/>
            <person name="Anthouard V."/>
            <person name="Babour A."/>
            <person name="Barbe V."/>
            <person name="Barnay S."/>
            <person name="Blanchin S."/>
            <person name="Beckerich J.-M."/>
            <person name="Beyne E."/>
            <person name="Bleykasten C."/>
            <person name="Boisrame A."/>
            <person name="Boyer J."/>
            <person name="Cattolico L."/>
            <person name="Confanioleri F."/>
            <person name="de Daruvar A."/>
            <person name="Despons L."/>
            <person name="Fabre E."/>
            <person name="Fairhead C."/>
            <person name="Ferry-Dumazet H."/>
            <person name="Groppi A."/>
            <person name="Hantraye F."/>
            <person name="Hennequin C."/>
            <person name="Jauniaux N."/>
            <person name="Joyet P."/>
            <person name="Kachouri R."/>
            <person name="Kerrest A."/>
            <person name="Koszul R."/>
            <person name="Lemaire M."/>
            <person name="Lesur I."/>
            <person name="Ma L."/>
            <person name="Muller H."/>
            <person name="Nicaud J.-M."/>
            <person name="Nikolski M."/>
            <person name="Oztas S."/>
            <person name="Ozier-Kalogeropoulos O."/>
            <person name="Pellenz S."/>
            <person name="Potier S."/>
            <person name="Richard G.-F."/>
            <person name="Straub M.-L."/>
            <person name="Suleau A."/>
            <person name="Swennen D."/>
            <person name="Tekaia F."/>
            <person name="Wesolowski-Louvel M."/>
            <person name="Westhof E."/>
            <person name="Wirth B."/>
            <person name="Zeniou-Meyer M."/>
            <person name="Zivanovic Y."/>
            <person name="Bolotin-Fukuhara M."/>
            <person name="Thierry A."/>
            <person name="Bouchier C."/>
            <person name="Caudron B."/>
            <person name="Scarpelli C."/>
            <person name="Gaillardin C."/>
            <person name="Weissenbach J."/>
            <person name="Wincker P."/>
            <person name="Souciet J.-L."/>
        </authorList>
    </citation>
    <scope>NUCLEOTIDE SEQUENCE [LARGE SCALE GENOMIC DNA]</scope>
    <source>
        <strain>ATCC 2001 / BCRC 20586 / JCM 3761 / NBRC 0622 / NRRL Y-65 / CBS 138</strain>
    </source>
</reference>
<protein>
    <recommendedName>
        <fullName>Ubiquitin-like modifier-activating enzyme ATG7</fullName>
    </recommendedName>
    <alternativeName>
        <fullName>ATG12-activating enzyme E1 ATG7</fullName>
    </alternativeName>
    <alternativeName>
        <fullName>Autophagy-related protein 7</fullName>
    </alternativeName>
</protein>
<proteinExistence type="inferred from homology"/>
<organism>
    <name type="scientific">Candida glabrata (strain ATCC 2001 / BCRC 20586 / JCM 3761 / NBRC 0622 / NRRL Y-65 / CBS 138)</name>
    <name type="common">Yeast</name>
    <name type="synonym">Nakaseomyces glabratus</name>
    <dbReference type="NCBI Taxonomy" id="284593"/>
    <lineage>
        <taxon>Eukaryota</taxon>
        <taxon>Fungi</taxon>
        <taxon>Dikarya</taxon>
        <taxon>Ascomycota</taxon>
        <taxon>Saccharomycotina</taxon>
        <taxon>Saccharomycetes</taxon>
        <taxon>Saccharomycetales</taxon>
        <taxon>Saccharomycetaceae</taxon>
        <taxon>Nakaseomyces</taxon>
    </lineage>
</organism>
<comment type="function">
    <text evidence="1">E1-like activating enzyme involved in the 2 ubiquitin-like systems required for cytoplasm to vacuole transport (Cvt) and autophagy. Activates ATG12 for its conjugation with ATG5 and ATG8 for its conjugation with phosphatidylethanolamine. Both systems are needed for the ATG8 association to Cvt vesicles and autophagosomes membranes. Autophagy is essential for maintenance of amino acid levels and protein synthesis under nitrogen starvation. Required for selective autophagic degradation of the nucleus (nucleophagy) as well as for mitophagy which contributes to regulate mitochondrial quantity and quality by eliminating the mitochondria to a basal level to fulfill cellular energy requirements and preventing excess ROS production. Plays a role in the regulation of filamentous growth and chronological longevity (By similarity).</text>
</comment>
<comment type="subunit">
    <text evidence="1">Homodimer.</text>
</comment>
<comment type="subcellular location">
    <subcellularLocation>
        <location evidence="1">Cytoplasm</location>
    </subcellularLocation>
    <subcellularLocation>
        <location evidence="1">Preautophagosomal structure</location>
    </subcellularLocation>
</comment>
<comment type="domain">
    <text evidence="1">The GxGxxG motif is important for the function, possibly through binding with ATP.</text>
</comment>
<comment type="similarity">
    <text evidence="2">Belongs to the ATG7 family.</text>
</comment>